<keyword id="KW-1185">Reference proteome</keyword>
<keyword id="KW-0687">Ribonucleoprotein</keyword>
<keyword id="KW-0689">Ribosomal protein</keyword>
<dbReference type="EMBL" id="BX571872">
    <property type="protein sequence ID" value="CAE16349.1"/>
    <property type="molecule type" value="Genomic_DNA"/>
</dbReference>
<dbReference type="RefSeq" id="WP_001144069.1">
    <property type="nucleotide sequence ID" value="NC_005126.1"/>
</dbReference>
<dbReference type="SMR" id="P68682"/>
<dbReference type="STRING" id="243265.plu3977"/>
<dbReference type="GeneID" id="98390195"/>
<dbReference type="KEGG" id="plu:plu3977"/>
<dbReference type="eggNOG" id="COG0828">
    <property type="taxonomic scope" value="Bacteria"/>
</dbReference>
<dbReference type="HOGENOM" id="CLU_159258_1_0_6"/>
<dbReference type="OrthoDB" id="9799244at2"/>
<dbReference type="Proteomes" id="UP000002514">
    <property type="component" value="Chromosome"/>
</dbReference>
<dbReference type="GO" id="GO:1990904">
    <property type="term" value="C:ribonucleoprotein complex"/>
    <property type="evidence" value="ECO:0007669"/>
    <property type="project" value="UniProtKB-KW"/>
</dbReference>
<dbReference type="GO" id="GO:0005840">
    <property type="term" value="C:ribosome"/>
    <property type="evidence" value="ECO:0007669"/>
    <property type="project" value="UniProtKB-KW"/>
</dbReference>
<dbReference type="GO" id="GO:0003735">
    <property type="term" value="F:structural constituent of ribosome"/>
    <property type="evidence" value="ECO:0007669"/>
    <property type="project" value="InterPro"/>
</dbReference>
<dbReference type="GO" id="GO:0006412">
    <property type="term" value="P:translation"/>
    <property type="evidence" value="ECO:0007669"/>
    <property type="project" value="UniProtKB-UniRule"/>
</dbReference>
<dbReference type="FunFam" id="1.20.5.1150:FF:000001">
    <property type="entry name" value="30S ribosomal protein S21"/>
    <property type="match status" value="1"/>
</dbReference>
<dbReference type="Gene3D" id="1.20.5.1150">
    <property type="entry name" value="Ribosomal protein S8"/>
    <property type="match status" value="1"/>
</dbReference>
<dbReference type="HAMAP" id="MF_00358">
    <property type="entry name" value="Ribosomal_bS21"/>
    <property type="match status" value="1"/>
</dbReference>
<dbReference type="InterPro" id="IPR001911">
    <property type="entry name" value="Ribosomal_bS21"/>
</dbReference>
<dbReference type="InterPro" id="IPR018278">
    <property type="entry name" value="Ribosomal_bS21_CS"/>
</dbReference>
<dbReference type="InterPro" id="IPR038380">
    <property type="entry name" value="Ribosomal_bS21_sf"/>
</dbReference>
<dbReference type="NCBIfam" id="TIGR00030">
    <property type="entry name" value="S21p"/>
    <property type="match status" value="1"/>
</dbReference>
<dbReference type="PANTHER" id="PTHR21109">
    <property type="entry name" value="MITOCHONDRIAL 28S RIBOSOMAL PROTEIN S21"/>
    <property type="match status" value="1"/>
</dbReference>
<dbReference type="PANTHER" id="PTHR21109:SF22">
    <property type="entry name" value="SMALL RIBOSOMAL SUBUNIT PROTEIN BS21"/>
    <property type="match status" value="1"/>
</dbReference>
<dbReference type="Pfam" id="PF01165">
    <property type="entry name" value="Ribosomal_S21"/>
    <property type="match status" value="1"/>
</dbReference>
<dbReference type="PRINTS" id="PR00976">
    <property type="entry name" value="RIBOSOMALS21"/>
</dbReference>
<dbReference type="PROSITE" id="PS01181">
    <property type="entry name" value="RIBOSOMAL_S21"/>
    <property type="match status" value="1"/>
</dbReference>
<name>RS21_PHOLL</name>
<feature type="initiator methionine" description="Removed" evidence="1">
    <location>
        <position position="1"/>
    </location>
</feature>
<feature type="chain" id="PRO_0000178358" description="Small ribosomal subunit protein bS21">
    <location>
        <begin position="2"/>
        <end position="71"/>
    </location>
</feature>
<feature type="region of interest" description="Disordered" evidence="2">
    <location>
        <begin position="43"/>
        <end position="71"/>
    </location>
</feature>
<feature type="compositionally biased region" description="Basic residues" evidence="2">
    <location>
        <begin position="46"/>
        <end position="59"/>
    </location>
</feature>
<feature type="compositionally biased region" description="Basic and acidic residues" evidence="2">
    <location>
        <begin position="60"/>
        <end position="71"/>
    </location>
</feature>
<accession>P68682</accession>
<accession>P02379</accession>
<accession>Q8ZI69</accession>
<evidence type="ECO:0000250" key="1"/>
<evidence type="ECO:0000256" key="2">
    <source>
        <dbReference type="SAM" id="MobiDB-lite"/>
    </source>
</evidence>
<evidence type="ECO:0000305" key="3"/>
<organism>
    <name type="scientific">Photorhabdus laumondii subsp. laumondii (strain DSM 15139 / CIP 105565 / TT01)</name>
    <name type="common">Photorhabdus luminescens subsp. laumondii</name>
    <dbReference type="NCBI Taxonomy" id="243265"/>
    <lineage>
        <taxon>Bacteria</taxon>
        <taxon>Pseudomonadati</taxon>
        <taxon>Pseudomonadota</taxon>
        <taxon>Gammaproteobacteria</taxon>
        <taxon>Enterobacterales</taxon>
        <taxon>Morganellaceae</taxon>
        <taxon>Photorhabdus</taxon>
    </lineage>
</organism>
<protein>
    <recommendedName>
        <fullName evidence="3">Small ribosomal subunit protein bS21</fullName>
    </recommendedName>
    <alternativeName>
        <fullName>30S ribosomal protein S21</fullName>
    </alternativeName>
</protein>
<gene>
    <name type="primary">rpsU</name>
    <name type="ordered locus">plu3977</name>
</gene>
<reference key="1">
    <citation type="journal article" date="2003" name="Nat. Biotechnol.">
        <title>The genome sequence of the entomopathogenic bacterium Photorhabdus luminescens.</title>
        <authorList>
            <person name="Duchaud E."/>
            <person name="Rusniok C."/>
            <person name="Frangeul L."/>
            <person name="Buchrieser C."/>
            <person name="Givaudan A."/>
            <person name="Taourit S."/>
            <person name="Bocs S."/>
            <person name="Boursaux-Eude C."/>
            <person name="Chandler M."/>
            <person name="Charles J.-F."/>
            <person name="Dassa E."/>
            <person name="Derose R."/>
            <person name="Derzelle S."/>
            <person name="Freyssinet G."/>
            <person name="Gaudriault S."/>
            <person name="Medigue C."/>
            <person name="Lanois A."/>
            <person name="Powell K."/>
            <person name="Siguier P."/>
            <person name="Vincent R."/>
            <person name="Wingate V."/>
            <person name="Zouine M."/>
            <person name="Glaser P."/>
            <person name="Boemare N."/>
            <person name="Danchin A."/>
            <person name="Kunst F."/>
        </authorList>
    </citation>
    <scope>NUCLEOTIDE SEQUENCE [LARGE SCALE GENOMIC DNA]</scope>
    <source>
        <strain>DSM 15139 / CIP 105565 / TT01</strain>
    </source>
</reference>
<comment type="similarity">
    <text evidence="3">Belongs to the bacterial ribosomal protein bS21 family.</text>
</comment>
<sequence>MPVIKVRENEPFDVALRRFKRSCEKAGVLAEVRRREFYEKPTTERKRAKASAVKRHAKKLARENARRTRLY</sequence>
<proteinExistence type="inferred from homology"/>